<keyword id="KW-0002">3D-structure</keyword>
<keyword id="KW-0092">Biotin</keyword>
<keyword id="KW-1015">Disulfide bond</keyword>
<keyword id="KW-0964">Secreted</keyword>
<keyword id="KW-0732">Signal</keyword>
<comment type="function">
    <text evidence="3">The exact role played by afifavidin is still obscure. Forms a strong non-covalent complex with biotin and 2-iminobiotin.</text>
</comment>
<comment type="biophysicochemical properties">
    <temperatureDependence>
        <text evidence="3">Is highly thermostable. Displays a Tm value of 62 degrees Celsius (apo form) and 74 degrees Celsius when complexed with biotin.</text>
    </temperatureDependence>
</comment>
<comment type="subunit">
    <text evidence="3">Exhibits a dynamic oligomeric assembly: the apo form self-assembles mostly into toroid-shaped homooctamers, with a small fraction of homodimers, yet upon biotin binding the intact afifavidin consists solely of the dimer.</text>
</comment>
<comment type="subcellular location">
    <subcellularLocation>
        <location evidence="2">Secreted</location>
    </subcellularLocation>
</comment>
<comment type="domain">
    <text evidence="3">The C-terminal segment plays a key role in the formation and stabilization of the octameric configuration, since the short afifavidin (lacking the last 5 amino acids) is only dimeric. The X-ray structure of intact afifavidin shows that the C-terminal segments stretch into the biotin-binding sites of adjacent non-canonical monomers.</text>
</comment>
<comment type="similarity">
    <text evidence="5">Belongs to the avidin/streptavidin family.</text>
</comment>
<dbReference type="PDB" id="6HDS">
    <property type="method" value="X-ray"/>
    <property type="resolution" value="1.74 A"/>
    <property type="chains" value="A/B/C/D=23-154"/>
</dbReference>
<dbReference type="PDB" id="6HDT">
    <property type="method" value="X-ray"/>
    <property type="resolution" value="1.54 A"/>
    <property type="chains" value="A/B/C/D=23-154"/>
</dbReference>
<dbReference type="PDB" id="6HDV">
    <property type="method" value="X-ray"/>
    <property type="resolution" value="2.16 A"/>
    <property type="chains" value="A/B/C/D=23-159"/>
</dbReference>
<dbReference type="PDBsum" id="6HDS"/>
<dbReference type="PDBsum" id="6HDT"/>
<dbReference type="PDBsum" id="6HDV"/>
<dbReference type="SMR" id="A0A493R6X0"/>
<dbReference type="GO" id="GO:0005576">
    <property type="term" value="C:extracellular region"/>
    <property type="evidence" value="ECO:0007669"/>
    <property type="project" value="UniProtKB-SubCell"/>
</dbReference>
<dbReference type="GO" id="GO:0009374">
    <property type="term" value="F:biotin binding"/>
    <property type="evidence" value="ECO:0007669"/>
    <property type="project" value="InterPro"/>
</dbReference>
<dbReference type="Gene3D" id="2.40.128.30">
    <property type="entry name" value="Avidin-like"/>
    <property type="match status" value="1"/>
</dbReference>
<dbReference type="InterPro" id="IPR036896">
    <property type="entry name" value="Avidin-like_sf"/>
</dbReference>
<dbReference type="InterPro" id="IPR005468">
    <property type="entry name" value="Avidin/str"/>
</dbReference>
<dbReference type="Pfam" id="PF01382">
    <property type="entry name" value="Avidin"/>
    <property type="match status" value="1"/>
</dbReference>
<dbReference type="SUPFAM" id="SSF50876">
    <property type="entry name" value="Avidin/streptavidin"/>
    <property type="match status" value="1"/>
</dbReference>
<dbReference type="PROSITE" id="PS51326">
    <property type="entry name" value="AVIDIN_2"/>
    <property type="match status" value="1"/>
</dbReference>
<proteinExistence type="evidence at protein level"/>
<organism>
    <name type="scientific">Afifella pfennigii</name>
    <name type="common">Rhodobium pfennigii</name>
    <dbReference type="NCBI Taxonomy" id="209897"/>
    <lineage>
        <taxon>Bacteria</taxon>
        <taxon>Pseudomonadati</taxon>
        <taxon>Pseudomonadota</taxon>
        <taxon>Alphaproteobacteria</taxon>
        <taxon>Hyphomicrobiales</taxon>
        <taxon>Afifellaceae</taxon>
        <taxon>Afifella</taxon>
    </lineage>
</organism>
<protein>
    <recommendedName>
        <fullName evidence="4">Afifavidin</fullName>
    </recommendedName>
</protein>
<evidence type="ECO:0000255" key="1"/>
<evidence type="ECO:0000255" key="2">
    <source>
        <dbReference type="PROSITE-ProRule" id="PRU00656"/>
    </source>
</evidence>
<evidence type="ECO:0000269" key="3">
    <source>
    </source>
</evidence>
<evidence type="ECO:0000303" key="4">
    <source>
    </source>
</evidence>
<evidence type="ECO:0000305" key="5"/>
<evidence type="ECO:0000312" key="6">
    <source>
        <dbReference type="PDB" id="6HDV"/>
    </source>
</evidence>
<evidence type="ECO:0007744" key="7">
    <source>
        <dbReference type="PDB" id="6HDS"/>
    </source>
</evidence>
<evidence type="ECO:0007744" key="8">
    <source>
        <dbReference type="PDB" id="6HDT"/>
    </source>
</evidence>
<evidence type="ECO:0007744" key="9">
    <source>
        <dbReference type="PDB" id="6HDV"/>
    </source>
</evidence>
<evidence type="ECO:0007829" key="10">
    <source>
        <dbReference type="PDB" id="6HDT"/>
    </source>
</evidence>
<evidence type="ECO:0007829" key="11">
    <source>
        <dbReference type="PDB" id="6HDV"/>
    </source>
</evidence>
<feature type="signal peptide" evidence="1">
    <location>
        <begin position="1"/>
        <end position="23"/>
    </location>
</feature>
<feature type="chain" id="PRO_0000458266" description="Afifavidin">
    <location>
        <begin position="24"/>
        <end position="159"/>
    </location>
</feature>
<feature type="domain" description="Avidin-like" evidence="2">
    <location>
        <begin position="36"/>
        <end position="151"/>
    </location>
</feature>
<feature type="binding site" evidence="3 8">
    <location>
        <position position="46"/>
    </location>
    <ligand>
        <name>biotin</name>
        <dbReference type="ChEBI" id="CHEBI:57586"/>
    </ligand>
</feature>
<feature type="binding site" evidence="3 8">
    <location>
        <position position="50"/>
    </location>
    <ligand>
        <name>biotin</name>
        <dbReference type="ChEBI" id="CHEBI:57586"/>
    </ligand>
</feature>
<feature type="binding site" evidence="3 8">
    <location>
        <position position="66"/>
    </location>
    <ligand>
        <name>biotin</name>
        <dbReference type="ChEBI" id="CHEBI:57586"/>
    </ligand>
</feature>
<feature type="binding site" evidence="3 8">
    <location>
        <position position="68"/>
    </location>
    <ligand>
        <name>biotin</name>
        <dbReference type="ChEBI" id="CHEBI:57586"/>
    </ligand>
</feature>
<feature type="binding site" evidence="3 8">
    <location>
        <position position="74"/>
    </location>
    <ligand>
        <name>biotin</name>
        <dbReference type="ChEBI" id="CHEBI:57586"/>
    </ligand>
</feature>
<feature type="binding site" evidence="3 8">
    <location>
        <position position="106"/>
    </location>
    <ligand>
        <name>biotin</name>
        <dbReference type="ChEBI" id="CHEBI:57586"/>
    </ligand>
</feature>
<feature type="binding site" evidence="3 8">
    <location>
        <position position="108"/>
    </location>
    <ligand>
        <name>biotin</name>
        <dbReference type="ChEBI" id="CHEBI:57586"/>
    </ligand>
</feature>
<feature type="binding site" evidence="3 8">
    <location>
        <position position="144"/>
    </location>
    <ligand>
        <name>biotin</name>
        <dbReference type="ChEBI" id="CHEBI:57586"/>
    </ligand>
</feature>
<feature type="disulfide bond" evidence="9">
    <location>
        <begin position="75"/>
        <end position="104"/>
    </location>
</feature>
<feature type="helix" evidence="10">
    <location>
        <begin position="28"/>
        <end position="35"/>
    </location>
</feature>
<feature type="strand" evidence="10">
    <location>
        <begin position="38"/>
        <end position="45"/>
    </location>
</feature>
<feature type="strand" evidence="10">
    <location>
        <begin position="51"/>
        <end position="56"/>
    </location>
</feature>
<feature type="strand" evidence="10">
    <location>
        <begin position="61"/>
        <end position="67"/>
    </location>
</feature>
<feature type="strand" evidence="10">
    <location>
        <begin position="77"/>
        <end position="87"/>
    </location>
</feature>
<feature type="strand" evidence="10">
    <location>
        <begin position="90"/>
        <end position="98"/>
    </location>
</feature>
<feature type="strand" evidence="10">
    <location>
        <begin position="103"/>
        <end position="117"/>
    </location>
</feature>
<feature type="strand" evidence="10">
    <location>
        <begin position="120"/>
        <end position="131"/>
    </location>
</feature>
<feature type="strand" evidence="10">
    <location>
        <begin position="134"/>
        <end position="136"/>
    </location>
</feature>
<feature type="strand" evidence="10">
    <location>
        <begin position="138"/>
        <end position="148"/>
    </location>
</feature>
<feature type="strand" evidence="11">
    <location>
        <begin position="155"/>
        <end position="157"/>
    </location>
</feature>
<reference evidence="6 7 8" key="1">
    <citation type="journal article" date="2018" name="FEBS J.">
        <title>Crystal structure of afifavidin reveals common features of molecular assemblage in the bacterial dimeric avidins.</title>
        <authorList>
            <person name="Avraham O."/>
            <person name="Bayer E.A."/>
            <person name="Livnah O."/>
        </authorList>
    </citation>
    <scope>X-RAY CRYSTALLOGRAPHY (1.54 ANGSTROMS) OF INTACT APOFORM (23-159) AND SHORT AFIFAVIDIN (23-154) IN APOFORM AND IN COMPLEX WITH BIOTIN</scope>
    <scope>FUNCTION</scope>
    <scope>DISULFIDE BONDS</scope>
    <scope>SUBUNIT</scope>
    <scope>BIOPHYSICOCHEMICAL PROPERTIES</scope>
    <scope>DOMAIN</scope>
</reference>
<name>AFAVI_AFIPF</name>
<sequence>MRRLASLAVALPLLAVVASPALAQDMSPRQSAEAFGVPAVSSSWVNQDGSTMTLVFGAGNSVSGFYVNNAPGFGCQGTPYPLVGLTWGNFIGFTVAWDNATANCNSVTSWTGFAEAAGSDVTIVTDWNLAYQGSSSGEIQQGSDTFTLVNKAMKETPKM</sequence>
<accession>A0A493R6X0</accession>
<accession>A0A493R6W9</accession>